<accession>Q9JIG4</accession>
<accession>B1AW09</accession>
<accession>B1AW10</accession>
<accession>Q3UGL4</accession>
<accession>Q6PCL6</accession>
<protein>
    <recommendedName>
        <fullName>Protein phosphatase 1 regulatory subunit 3F</fullName>
        <shortName>R3F</shortName>
    </recommendedName>
</protein>
<feature type="chain" id="PRO_0000257497" description="Protein phosphatase 1 regulatory subunit 3F">
    <location>
        <begin position="1"/>
        <end position="799"/>
    </location>
</feature>
<feature type="topological domain" description="Cytoplasmic" evidence="2">
    <location>
        <begin position="1"/>
        <end position="772"/>
    </location>
</feature>
<feature type="transmembrane region" description="Helical" evidence="2">
    <location>
        <begin position="773"/>
        <end position="793"/>
    </location>
</feature>
<feature type="topological domain" description="Extracellular" evidence="2">
    <location>
        <begin position="794"/>
        <end position="799"/>
    </location>
</feature>
<feature type="domain" description="CBM21" evidence="3">
    <location>
        <begin position="127"/>
        <end position="283"/>
    </location>
</feature>
<feature type="region of interest" description="Disordered" evidence="4">
    <location>
        <begin position="1"/>
        <end position="30"/>
    </location>
</feature>
<feature type="region of interest" description="Disordered" evidence="4">
    <location>
        <begin position="53"/>
        <end position="108"/>
    </location>
</feature>
<feature type="region of interest" description="Disordered" evidence="4">
    <location>
        <begin position="201"/>
        <end position="235"/>
    </location>
</feature>
<feature type="region of interest" description="Disordered" evidence="4">
    <location>
        <begin position="332"/>
        <end position="353"/>
    </location>
</feature>
<feature type="region of interest" description="Disordered" evidence="4">
    <location>
        <begin position="417"/>
        <end position="439"/>
    </location>
</feature>
<feature type="region of interest" description="Disordered" evidence="4">
    <location>
        <begin position="566"/>
        <end position="600"/>
    </location>
</feature>
<feature type="region of interest" description="Disordered" evidence="4">
    <location>
        <begin position="663"/>
        <end position="688"/>
    </location>
</feature>
<feature type="region of interest" description="Disordered" evidence="4">
    <location>
        <begin position="722"/>
        <end position="743"/>
    </location>
</feature>
<feature type="short sequence motif" description="PP1-binding motif">
    <location>
        <begin position="36"/>
        <end position="39"/>
    </location>
</feature>
<feature type="compositionally biased region" description="Pro residues" evidence="4">
    <location>
        <begin position="7"/>
        <end position="19"/>
    </location>
</feature>
<feature type="compositionally biased region" description="Low complexity" evidence="4">
    <location>
        <begin position="20"/>
        <end position="30"/>
    </location>
</feature>
<feature type="compositionally biased region" description="Acidic residues" evidence="4">
    <location>
        <begin position="78"/>
        <end position="97"/>
    </location>
</feature>
<feature type="compositionally biased region" description="Basic and acidic residues" evidence="4">
    <location>
        <begin position="334"/>
        <end position="353"/>
    </location>
</feature>
<feature type="compositionally biased region" description="Acidic residues" evidence="4">
    <location>
        <begin position="569"/>
        <end position="579"/>
    </location>
</feature>
<feature type="compositionally biased region" description="Low complexity" evidence="4">
    <location>
        <begin position="585"/>
        <end position="594"/>
    </location>
</feature>
<feature type="compositionally biased region" description="Basic and acidic residues" evidence="4">
    <location>
        <begin position="679"/>
        <end position="688"/>
    </location>
</feature>
<feature type="modified residue" description="Phosphoserine" evidence="1">
    <location>
        <position position="18"/>
    </location>
</feature>
<feature type="modified residue" description="Phosphoserine" evidence="8">
    <location>
        <position position="545"/>
    </location>
</feature>
<feature type="modified residue" description="Phosphoserine" evidence="8">
    <location>
        <position position="587"/>
    </location>
</feature>
<feature type="modified residue" description="Phosphoserine" evidence="8">
    <location>
        <position position="592"/>
    </location>
</feature>
<feature type="splice variant" id="VSP_021363" description="In isoform 2." evidence="6">
    <original>L</original>
    <variation>LQ</variation>
    <location>
        <position position="377"/>
    </location>
</feature>
<feature type="mutagenesis site" description="Abrogates PP1-binding." evidence="5">
    <original>F</original>
    <variation>A</variation>
    <location>
        <position position="39"/>
    </location>
</feature>
<feature type="sequence conflict" description="In Ref. 2; AAH59275." evidence="7" ref="2">
    <original>T</original>
    <variation>N</variation>
    <location>
        <position position="266"/>
    </location>
</feature>
<organism>
    <name type="scientific">Mus musculus</name>
    <name type="common">Mouse</name>
    <dbReference type="NCBI Taxonomy" id="10090"/>
    <lineage>
        <taxon>Eukaryota</taxon>
        <taxon>Metazoa</taxon>
        <taxon>Chordata</taxon>
        <taxon>Craniata</taxon>
        <taxon>Vertebrata</taxon>
        <taxon>Euteleostomi</taxon>
        <taxon>Mammalia</taxon>
        <taxon>Eutheria</taxon>
        <taxon>Euarchontoglires</taxon>
        <taxon>Glires</taxon>
        <taxon>Rodentia</taxon>
        <taxon>Myomorpha</taxon>
        <taxon>Muroidea</taxon>
        <taxon>Muridae</taxon>
        <taxon>Murinae</taxon>
        <taxon>Mus</taxon>
        <taxon>Mus</taxon>
    </lineage>
</organism>
<dbReference type="EMBL" id="AL731793">
    <property type="protein sequence ID" value="CAM14759.1"/>
    <property type="status" value="ALT_INIT"/>
    <property type="molecule type" value="Genomic_DNA"/>
</dbReference>
<dbReference type="EMBL" id="AL731793">
    <property type="protein sequence ID" value="CAM14760.1"/>
    <property type="molecule type" value="Genomic_DNA"/>
</dbReference>
<dbReference type="EMBL" id="BC059275">
    <property type="protein sequence ID" value="AAH59275.1"/>
    <property type="status" value="ALT_INIT"/>
    <property type="molecule type" value="mRNA"/>
</dbReference>
<dbReference type="EMBL" id="AF229644">
    <property type="protein sequence ID" value="AAF66954.2"/>
    <property type="status" value="ALT_INIT"/>
    <property type="molecule type" value="mRNA"/>
</dbReference>
<dbReference type="EMBL" id="AK147873">
    <property type="protein sequence ID" value="BAE28194.1"/>
    <property type="molecule type" value="mRNA"/>
</dbReference>
<dbReference type="CCDS" id="CCDS29964.2">
    <molecule id="Q9JIG4-1"/>
</dbReference>
<dbReference type="CCDS" id="CCDS72328.1">
    <molecule id="Q9JIG4-2"/>
</dbReference>
<dbReference type="RefSeq" id="NP_001277503.1">
    <molecule id="Q9JIG4-2"/>
    <property type="nucleotide sequence ID" value="NM_001290574.2"/>
</dbReference>
<dbReference type="RefSeq" id="NP_613071.3">
    <molecule id="Q9JIG4-1"/>
    <property type="nucleotide sequence ID" value="NM_138605.4"/>
</dbReference>
<dbReference type="SMR" id="Q9JIG4"/>
<dbReference type="BioGRID" id="207708">
    <property type="interactions" value="2"/>
</dbReference>
<dbReference type="FunCoup" id="Q9JIG4">
    <property type="interactions" value="149"/>
</dbReference>
<dbReference type="IntAct" id="Q9JIG4">
    <property type="interactions" value="1"/>
</dbReference>
<dbReference type="STRING" id="10090.ENSMUSP00000122903"/>
<dbReference type="CAZy" id="CBM21">
    <property type="family name" value="Carbohydrate-Binding Module Family 21"/>
</dbReference>
<dbReference type="GlyGen" id="Q9JIG4">
    <property type="glycosylation" value="4 sites, 1 N-linked glycan (1 site)"/>
</dbReference>
<dbReference type="iPTMnet" id="Q9JIG4"/>
<dbReference type="PhosphoSitePlus" id="Q9JIG4"/>
<dbReference type="PaxDb" id="10090-ENSMUSP00000122903"/>
<dbReference type="ProteomicsDB" id="291843">
    <molecule id="Q9JIG4-1"/>
</dbReference>
<dbReference type="ProteomicsDB" id="291844">
    <molecule id="Q9JIG4-2"/>
</dbReference>
<dbReference type="Antibodypedia" id="338">
    <property type="antibodies" value="72 antibodies from 17 providers"/>
</dbReference>
<dbReference type="Ensembl" id="ENSMUST00000115742.9">
    <molecule id="Q9JIG4-1"/>
    <property type="protein sequence ID" value="ENSMUSP00000111407.4"/>
    <property type="gene ID" value="ENSMUSG00000039556.17"/>
</dbReference>
<dbReference type="Ensembl" id="ENSMUST00000150787.8">
    <molecule id="Q9JIG4-2"/>
    <property type="protein sequence ID" value="ENSMUSP00000122903.2"/>
    <property type="gene ID" value="ENSMUSG00000039556.17"/>
</dbReference>
<dbReference type="GeneID" id="54646"/>
<dbReference type="KEGG" id="mmu:54646"/>
<dbReference type="UCSC" id="uc009slj.2">
    <molecule id="Q9JIG4-1"/>
    <property type="organism name" value="mouse"/>
</dbReference>
<dbReference type="UCSC" id="uc057aqo.1">
    <molecule id="Q9JIG4-2"/>
    <property type="organism name" value="mouse"/>
</dbReference>
<dbReference type="AGR" id="MGI:1859617"/>
<dbReference type="CTD" id="89801"/>
<dbReference type="MGI" id="MGI:1859617">
    <property type="gene designation" value="Ppp1r3f"/>
</dbReference>
<dbReference type="VEuPathDB" id="HostDB:ENSMUSG00000039556"/>
<dbReference type="eggNOG" id="KOG3986">
    <property type="taxonomic scope" value="Eukaryota"/>
</dbReference>
<dbReference type="GeneTree" id="ENSGT00390000013859"/>
<dbReference type="HOGENOM" id="CLU_019259_1_0_1"/>
<dbReference type="InParanoid" id="Q9JIG4"/>
<dbReference type="OMA" id="NMDDNTP"/>
<dbReference type="PhylomeDB" id="Q9JIG4"/>
<dbReference type="TreeFam" id="TF352142"/>
<dbReference type="BioGRID-ORCS" id="54646">
    <property type="hits" value="3 hits in 78 CRISPR screens"/>
</dbReference>
<dbReference type="ChiTaRS" id="Ccdc22">
    <property type="organism name" value="mouse"/>
</dbReference>
<dbReference type="PRO" id="PR:Q9JIG4"/>
<dbReference type="Proteomes" id="UP000000589">
    <property type="component" value="Chromosome X"/>
</dbReference>
<dbReference type="RNAct" id="Q9JIG4">
    <property type="molecule type" value="protein"/>
</dbReference>
<dbReference type="Bgee" id="ENSMUSG00000039556">
    <property type="expression patterns" value="Expressed in dentate gyrus of hippocampal formation granule cell and 65 other cell types or tissues"/>
</dbReference>
<dbReference type="ExpressionAtlas" id="Q9JIG4">
    <property type="expression patterns" value="baseline and differential"/>
</dbReference>
<dbReference type="GO" id="GO:0016020">
    <property type="term" value="C:membrane"/>
    <property type="evidence" value="ECO:0000266"/>
    <property type="project" value="MGI"/>
</dbReference>
<dbReference type="GO" id="GO:2001069">
    <property type="term" value="F:glycogen binding"/>
    <property type="evidence" value="ECO:0000266"/>
    <property type="project" value="MGI"/>
</dbReference>
<dbReference type="GO" id="GO:0019903">
    <property type="term" value="F:protein phosphatase binding"/>
    <property type="evidence" value="ECO:0000266"/>
    <property type="project" value="MGI"/>
</dbReference>
<dbReference type="GO" id="GO:0005979">
    <property type="term" value="P:regulation of glycogen biosynthetic process"/>
    <property type="evidence" value="ECO:0000266"/>
    <property type="project" value="MGI"/>
</dbReference>
<dbReference type="Gene3D" id="2.60.40.2440">
    <property type="entry name" value="Carbohydrate binding type-21 domain"/>
    <property type="match status" value="1"/>
</dbReference>
<dbReference type="InterPro" id="IPR005036">
    <property type="entry name" value="CBM21_dom"/>
</dbReference>
<dbReference type="InterPro" id="IPR038175">
    <property type="entry name" value="CBM21_dom_sf"/>
</dbReference>
<dbReference type="InterPro" id="IPR050782">
    <property type="entry name" value="PP1_regulatory_subunit_3"/>
</dbReference>
<dbReference type="PANTHER" id="PTHR12307">
    <property type="entry name" value="PROTEIN PHOSPHATASE 1 REGULATORY SUBUNIT"/>
    <property type="match status" value="1"/>
</dbReference>
<dbReference type="PANTHER" id="PTHR12307:SF40">
    <property type="entry name" value="PROTEIN PHOSPHATASE 1 REGULATORY SUBUNIT 3F"/>
    <property type="match status" value="1"/>
</dbReference>
<dbReference type="Pfam" id="PF03370">
    <property type="entry name" value="CBM_21"/>
    <property type="match status" value="1"/>
</dbReference>
<dbReference type="PROSITE" id="PS51159">
    <property type="entry name" value="CBM21"/>
    <property type="match status" value="1"/>
</dbReference>
<reference key="1">
    <citation type="journal article" date="2009" name="PLoS Biol.">
        <title>Lineage-specific biology revealed by a finished genome assembly of the mouse.</title>
        <authorList>
            <person name="Church D.M."/>
            <person name="Goodstadt L."/>
            <person name="Hillier L.W."/>
            <person name="Zody M.C."/>
            <person name="Goldstein S."/>
            <person name="She X."/>
            <person name="Bult C.J."/>
            <person name="Agarwala R."/>
            <person name="Cherry J.L."/>
            <person name="DiCuccio M."/>
            <person name="Hlavina W."/>
            <person name="Kapustin Y."/>
            <person name="Meric P."/>
            <person name="Maglott D."/>
            <person name="Birtle Z."/>
            <person name="Marques A.C."/>
            <person name="Graves T."/>
            <person name="Zhou S."/>
            <person name="Teague B."/>
            <person name="Potamousis K."/>
            <person name="Churas C."/>
            <person name="Place M."/>
            <person name="Herschleb J."/>
            <person name="Runnheim R."/>
            <person name="Forrest D."/>
            <person name="Amos-Landgraf J."/>
            <person name="Schwartz D.C."/>
            <person name="Cheng Z."/>
            <person name="Lindblad-Toh K."/>
            <person name="Eichler E.E."/>
            <person name="Ponting C.P."/>
        </authorList>
    </citation>
    <scope>NUCLEOTIDE SEQUENCE [LARGE SCALE GENOMIC DNA]</scope>
    <source>
        <strain>C57BL/6J</strain>
    </source>
</reference>
<reference key="2">
    <citation type="journal article" date="2004" name="Genome Res.">
        <title>The status, quality, and expansion of the NIH full-length cDNA project: the Mammalian Gene Collection (MGC).</title>
        <authorList>
            <consortium name="The MGC Project Team"/>
        </authorList>
    </citation>
    <scope>NUCLEOTIDE SEQUENCE [LARGE SCALE MRNA] OF 12-799 (ISOFORM 2)</scope>
    <source>
        <strain>FVB/N</strain>
        <tissue>Mammary tumor</tissue>
    </source>
</reference>
<reference key="3">
    <citation type="journal article" date="2000" name="Genomics">
        <title>A transcript map of a 2-Mb BAC contig in the proximal portion of the mouse X chromosome and regional mapping of the scurfy mutation.</title>
        <authorList>
            <person name="Means G.D."/>
            <person name="Toy D.Y."/>
            <person name="Baum P.R."/>
            <person name="Derry J.M.J."/>
        </authorList>
    </citation>
    <scope>NUCLEOTIDE SEQUENCE [MRNA] OF 44-799 (ISOFORM 1)</scope>
    <source>
        <tissue>Thymus</tissue>
    </source>
</reference>
<reference key="4">
    <citation type="journal article" date="2005" name="Science">
        <title>The transcriptional landscape of the mammalian genome.</title>
        <authorList>
            <person name="Carninci P."/>
            <person name="Kasukawa T."/>
            <person name="Katayama S."/>
            <person name="Gough J."/>
            <person name="Frith M.C."/>
            <person name="Maeda N."/>
            <person name="Oyama R."/>
            <person name="Ravasi T."/>
            <person name="Lenhard B."/>
            <person name="Wells C."/>
            <person name="Kodzius R."/>
            <person name="Shimokawa K."/>
            <person name="Bajic V.B."/>
            <person name="Brenner S.E."/>
            <person name="Batalov S."/>
            <person name="Forrest A.R."/>
            <person name="Zavolan M."/>
            <person name="Davis M.J."/>
            <person name="Wilming L.G."/>
            <person name="Aidinis V."/>
            <person name="Allen J.E."/>
            <person name="Ambesi-Impiombato A."/>
            <person name="Apweiler R."/>
            <person name="Aturaliya R.N."/>
            <person name="Bailey T.L."/>
            <person name="Bansal M."/>
            <person name="Baxter L."/>
            <person name="Beisel K.W."/>
            <person name="Bersano T."/>
            <person name="Bono H."/>
            <person name="Chalk A.M."/>
            <person name="Chiu K.P."/>
            <person name="Choudhary V."/>
            <person name="Christoffels A."/>
            <person name="Clutterbuck D.R."/>
            <person name="Crowe M.L."/>
            <person name="Dalla E."/>
            <person name="Dalrymple B.P."/>
            <person name="de Bono B."/>
            <person name="Della Gatta G."/>
            <person name="di Bernardo D."/>
            <person name="Down T."/>
            <person name="Engstrom P."/>
            <person name="Fagiolini M."/>
            <person name="Faulkner G."/>
            <person name="Fletcher C.F."/>
            <person name="Fukushima T."/>
            <person name="Furuno M."/>
            <person name="Futaki S."/>
            <person name="Gariboldi M."/>
            <person name="Georgii-Hemming P."/>
            <person name="Gingeras T.R."/>
            <person name="Gojobori T."/>
            <person name="Green R.E."/>
            <person name="Gustincich S."/>
            <person name="Harbers M."/>
            <person name="Hayashi Y."/>
            <person name="Hensch T.K."/>
            <person name="Hirokawa N."/>
            <person name="Hill D."/>
            <person name="Huminiecki L."/>
            <person name="Iacono M."/>
            <person name="Ikeo K."/>
            <person name="Iwama A."/>
            <person name="Ishikawa T."/>
            <person name="Jakt M."/>
            <person name="Kanapin A."/>
            <person name="Katoh M."/>
            <person name="Kawasawa Y."/>
            <person name="Kelso J."/>
            <person name="Kitamura H."/>
            <person name="Kitano H."/>
            <person name="Kollias G."/>
            <person name="Krishnan S.P."/>
            <person name="Kruger A."/>
            <person name="Kummerfeld S.K."/>
            <person name="Kurochkin I.V."/>
            <person name="Lareau L.F."/>
            <person name="Lazarevic D."/>
            <person name="Lipovich L."/>
            <person name="Liu J."/>
            <person name="Liuni S."/>
            <person name="McWilliam S."/>
            <person name="Madan Babu M."/>
            <person name="Madera M."/>
            <person name="Marchionni L."/>
            <person name="Matsuda H."/>
            <person name="Matsuzawa S."/>
            <person name="Miki H."/>
            <person name="Mignone F."/>
            <person name="Miyake S."/>
            <person name="Morris K."/>
            <person name="Mottagui-Tabar S."/>
            <person name="Mulder N."/>
            <person name="Nakano N."/>
            <person name="Nakauchi H."/>
            <person name="Ng P."/>
            <person name="Nilsson R."/>
            <person name="Nishiguchi S."/>
            <person name="Nishikawa S."/>
            <person name="Nori F."/>
            <person name="Ohara O."/>
            <person name="Okazaki Y."/>
            <person name="Orlando V."/>
            <person name="Pang K.C."/>
            <person name="Pavan W.J."/>
            <person name="Pavesi G."/>
            <person name="Pesole G."/>
            <person name="Petrovsky N."/>
            <person name="Piazza S."/>
            <person name="Reed J."/>
            <person name="Reid J.F."/>
            <person name="Ring B.Z."/>
            <person name="Ringwald M."/>
            <person name="Rost B."/>
            <person name="Ruan Y."/>
            <person name="Salzberg S.L."/>
            <person name="Sandelin A."/>
            <person name="Schneider C."/>
            <person name="Schoenbach C."/>
            <person name="Sekiguchi K."/>
            <person name="Semple C.A."/>
            <person name="Seno S."/>
            <person name="Sessa L."/>
            <person name="Sheng Y."/>
            <person name="Shibata Y."/>
            <person name="Shimada H."/>
            <person name="Shimada K."/>
            <person name="Silva D."/>
            <person name="Sinclair B."/>
            <person name="Sperling S."/>
            <person name="Stupka E."/>
            <person name="Sugiura K."/>
            <person name="Sultana R."/>
            <person name="Takenaka Y."/>
            <person name="Taki K."/>
            <person name="Tammoja K."/>
            <person name="Tan S.L."/>
            <person name="Tang S."/>
            <person name="Taylor M.S."/>
            <person name="Tegner J."/>
            <person name="Teichmann S.A."/>
            <person name="Ueda H.R."/>
            <person name="van Nimwegen E."/>
            <person name="Verardo R."/>
            <person name="Wei C.L."/>
            <person name="Yagi K."/>
            <person name="Yamanishi H."/>
            <person name="Zabarovsky E."/>
            <person name="Zhu S."/>
            <person name="Zimmer A."/>
            <person name="Hide W."/>
            <person name="Bult C."/>
            <person name="Grimmond S.M."/>
            <person name="Teasdale R.D."/>
            <person name="Liu E.T."/>
            <person name="Brusic V."/>
            <person name="Quackenbush J."/>
            <person name="Wahlestedt C."/>
            <person name="Mattick J.S."/>
            <person name="Hume D.A."/>
            <person name="Kai C."/>
            <person name="Sasaki D."/>
            <person name="Tomaru Y."/>
            <person name="Fukuda S."/>
            <person name="Kanamori-Katayama M."/>
            <person name="Suzuki M."/>
            <person name="Aoki J."/>
            <person name="Arakawa T."/>
            <person name="Iida J."/>
            <person name="Imamura K."/>
            <person name="Itoh M."/>
            <person name="Kato T."/>
            <person name="Kawaji H."/>
            <person name="Kawagashira N."/>
            <person name="Kawashima T."/>
            <person name="Kojima M."/>
            <person name="Kondo S."/>
            <person name="Konno H."/>
            <person name="Nakano K."/>
            <person name="Ninomiya N."/>
            <person name="Nishio T."/>
            <person name="Okada M."/>
            <person name="Plessy C."/>
            <person name="Shibata K."/>
            <person name="Shiraki T."/>
            <person name="Suzuki S."/>
            <person name="Tagami M."/>
            <person name="Waki K."/>
            <person name="Watahiki A."/>
            <person name="Okamura-Oho Y."/>
            <person name="Suzuki H."/>
            <person name="Kawai J."/>
            <person name="Hayashizaki Y."/>
        </authorList>
    </citation>
    <scope>NUCLEOTIDE SEQUENCE [LARGE SCALE MRNA] OF 393-735 (ISOFORMS 1/2)</scope>
    <source>
        <strain>C57BL/6J</strain>
        <tissue>Melanocyte</tissue>
    </source>
</reference>
<reference key="5">
    <citation type="journal article" date="2010" name="Cell">
        <title>A tissue-specific atlas of mouse protein phosphorylation and expression.</title>
        <authorList>
            <person name="Huttlin E.L."/>
            <person name="Jedrychowski M.P."/>
            <person name="Elias J.E."/>
            <person name="Goswami T."/>
            <person name="Rad R."/>
            <person name="Beausoleil S.A."/>
            <person name="Villen J."/>
            <person name="Haas W."/>
            <person name="Sowa M.E."/>
            <person name="Gygi S.P."/>
        </authorList>
    </citation>
    <scope>PHOSPHORYLATION [LARGE SCALE ANALYSIS] AT SER-545; SER-587 AND SER-592</scope>
    <scope>IDENTIFICATION BY MASS SPECTROMETRY [LARGE SCALE ANALYSIS]</scope>
    <source>
        <tissue>Brain</tissue>
    </source>
</reference>
<reference key="6">
    <citation type="journal article" date="2011" name="J. Neurochem.">
        <title>R3F, a novel membrane-associated glycogen targeting subunit of protein phosphatase 1 regulates glycogen synthase in astrocytoma cells in response to glucose and extracellular signals.</title>
        <authorList>
            <person name="Kelsall I.R."/>
            <person name="Voss M."/>
            <person name="Munro S."/>
            <person name="Cuthbertson D.J."/>
            <person name="Cohen P.T."/>
        </authorList>
    </citation>
    <scope>FUNCTION</scope>
    <scope>SUBCELLULAR LOCATION</scope>
    <scope>TISSUE SPECIFICITY</scope>
    <scope>MUTAGENESIS OF PHE-39</scope>
</reference>
<proteinExistence type="evidence at protein level"/>
<name>PPR3F_MOUSE</name>
<keyword id="KW-0025">Alternative splicing</keyword>
<keyword id="KW-0472">Membrane</keyword>
<keyword id="KW-0597">Phosphoprotein</keyword>
<keyword id="KW-1185">Reference proteome</keyword>
<keyword id="KW-0812">Transmembrane</keyword>
<keyword id="KW-1133">Transmembrane helix</keyword>
<evidence type="ECO:0000250" key="1">
    <source>
        <dbReference type="UniProtKB" id="Q6ZSY5"/>
    </source>
</evidence>
<evidence type="ECO:0000255" key="2"/>
<evidence type="ECO:0000255" key="3">
    <source>
        <dbReference type="PROSITE-ProRule" id="PRU00491"/>
    </source>
</evidence>
<evidence type="ECO:0000256" key="4">
    <source>
        <dbReference type="SAM" id="MobiDB-lite"/>
    </source>
</evidence>
<evidence type="ECO:0000269" key="5">
    <source>
    </source>
</evidence>
<evidence type="ECO:0000303" key="6">
    <source>
    </source>
</evidence>
<evidence type="ECO:0000305" key="7"/>
<evidence type="ECO:0007744" key="8">
    <source>
    </source>
</evidence>
<comment type="function">
    <text evidence="5">Glycogen-targeting subunit for protein phosphatase 1 (PP1).</text>
</comment>
<comment type="subcellular location">
    <subcellularLocation>
        <location evidence="5">Membrane</location>
        <topology evidence="5">Single-pass membrane protein</topology>
    </subcellularLocation>
</comment>
<comment type="alternative products">
    <event type="alternative splicing"/>
    <isoform>
        <id>Q9JIG4-1</id>
        <name>1</name>
        <sequence type="displayed"/>
    </isoform>
    <isoform>
        <id>Q9JIG4-2</id>
        <name>2</name>
        <sequence type="described" ref="VSP_021363"/>
    </isoform>
</comment>
<comment type="tissue specificity">
    <text evidence="5">Highly expressed in brain (at protein level).</text>
</comment>
<comment type="sequence caution" evidence="7">
    <conflict type="erroneous initiation">
        <sequence resource="EMBL-CDS" id="AAF66954"/>
    </conflict>
</comment>
<comment type="sequence caution" evidence="7">
    <conflict type="erroneous initiation">
        <sequence resource="EMBL-CDS" id="AAH59275"/>
    </conflict>
</comment>
<comment type="sequence caution" evidence="7">
    <conflict type="erroneous initiation">
        <sequence resource="EMBL-CDS" id="CAM14759"/>
    </conflict>
</comment>
<sequence>MARTAPVEPPLRHPAPPSPAAGEPRASAEAAVAPRRVLFADEALGLPLAQLRRYRPWGGPGAGKMAAATGQDGGGGGADEEDDGEDGDEGEEEEEAFPDPSPPCPVPAGGGFYLVPTFSLPPALGRLERLGRVMVELEALLPPPGAVPGGSGVWVPGGRPPVVRGLVRVLNRSFEKAVHVRASHDGWATFCDHPARYVPRSPPGAGVGGTGAGDPLLDPGLGLGPGQMSASSPDDGGCTDRFAFQLPFAEGASDGARLDFVVRYETPEGTFWANNHGRNYTVLLRIAPAPTPTDAEGLPQQQQLQQLEPQPECQGPVEAEARQLKSCMKPVRRRPFEEEPRMRSADDNTLAEHPDVRESLGPLLAPTPLRPWPQMTLQVPEVMLTSNPQEEGDIPRSNPPVAFTEVRQAPAIRILPATCGLGGPPRDQASGPDASDRAAGSFLEPTQQQVEAAWESGGGRKAPMVGALTDEPARGLEIVSGLDELLGEDTIDQELEQLYLSHLSRLRAVAAAGGGEGTSPTHALGILTDRDLILKWPGPERALNSALAEEITLHYARLGCGVELIKDTEDPDDEGEGEDGLSITPSSPEGGSPKESPPEILSGARSVIATMGDVWVPWAERSSSRCDSPVVLGTQGQFTENPEKGMGKDTKSLHLNRVIVGMSKSPGEAGTESQMEELPTERESSWVPSSEKELPLPVQQEQSPALLGPTGTEVCLSSVAKPHVNSQEEEGGSLNLESPKRSPMPAAPAECACGLAPQLWGPLTQTLGVLAGLVMVPVALNSGVSLLVLVLCLSLAWFS</sequence>
<gene>
    <name type="primary">Ppp1r3f</name>
    <name type="synonym">DXImx48e</name>
</gene>